<proteinExistence type="inferred from homology"/>
<accession>A4H226</accession>
<accession>A4H231</accession>
<name>DB119_PONPY</name>
<keyword id="KW-0025">Alternative splicing</keyword>
<keyword id="KW-0044">Antibiotic</keyword>
<keyword id="KW-0929">Antimicrobial</keyword>
<keyword id="KW-0211">Defensin</keyword>
<keyword id="KW-1015">Disulfide bond</keyword>
<keyword id="KW-0964">Secreted</keyword>
<keyword id="KW-0732">Signal</keyword>
<comment type="function">
    <text evidence="3">Has antibacterial activity.</text>
</comment>
<comment type="subcellular location">
    <subcellularLocation>
        <location evidence="3">Secreted</location>
    </subcellularLocation>
</comment>
<comment type="alternative products">
    <event type="alternative splicing"/>
    <isoform>
        <id>A4H226-1</id>
        <name>1</name>
        <sequence type="displayed"/>
    </isoform>
    <isoform>
        <id>A4H226-2</id>
        <name>2</name>
        <sequence type="described" ref="VSP_029876"/>
    </isoform>
</comment>
<comment type="similarity">
    <text evidence="3">Belongs to the beta-defensin family.</text>
</comment>
<dbReference type="EMBL" id="AM410131">
    <property type="protein sequence ID" value="CAL68946.1"/>
    <property type="molecule type" value="Genomic_DNA"/>
</dbReference>
<dbReference type="EMBL" id="AM410136">
    <property type="protein sequence ID" value="CAL68951.1"/>
    <property type="molecule type" value="Genomic_DNA"/>
</dbReference>
<dbReference type="RefSeq" id="XP_054322839.1">
    <molecule id="A4H226-2"/>
    <property type="nucleotide sequence ID" value="XM_054466864.1"/>
</dbReference>
<dbReference type="SMR" id="A4H226"/>
<dbReference type="GO" id="GO:0005576">
    <property type="term" value="C:extracellular region"/>
    <property type="evidence" value="ECO:0007669"/>
    <property type="project" value="UniProtKB-SubCell"/>
</dbReference>
<dbReference type="GO" id="GO:0001530">
    <property type="term" value="F:lipopolysaccharide binding"/>
    <property type="evidence" value="ECO:0007669"/>
    <property type="project" value="TreeGrafter"/>
</dbReference>
<dbReference type="GO" id="GO:0061760">
    <property type="term" value="P:antifungal innate immune response"/>
    <property type="evidence" value="ECO:0007669"/>
    <property type="project" value="TreeGrafter"/>
</dbReference>
<dbReference type="GO" id="GO:0050829">
    <property type="term" value="P:defense response to Gram-negative bacterium"/>
    <property type="evidence" value="ECO:0007669"/>
    <property type="project" value="InterPro"/>
</dbReference>
<dbReference type="GO" id="GO:0050830">
    <property type="term" value="P:defense response to Gram-positive bacterium"/>
    <property type="evidence" value="ECO:0007669"/>
    <property type="project" value="InterPro"/>
</dbReference>
<dbReference type="InterPro" id="IPR028060">
    <property type="entry name" value="Defensin_big_dom"/>
</dbReference>
<dbReference type="PANTHER" id="PTHR47902">
    <property type="entry name" value="BETA-DEFENSIN 119"/>
    <property type="match status" value="1"/>
</dbReference>
<dbReference type="PANTHER" id="PTHR47902:SF1">
    <property type="entry name" value="BETA-DEFENSIN 119"/>
    <property type="match status" value="1"/>
</dbReference>
<dbReference type="Pfam" id="PF14862">
    <property type="entry name" value="Defensin_big"/>
    <property type="match status" value="1"/>
</dbReference>
<reference key="1">
    <citation type="submission" date="2006-11" db="EMBL/GenBank/DDBJ databases">
        <title>Evolution and sequence variation of human beta-defensin genes.</title>
        <authorList>
            <person name="Hollox E.J."/>
            <person name="Armour J.A.L."/>
        </authorList>
    </citation>
    <scope>NUCLEOTIDE SEQUENCE [GENOMIC DNA] (ISOFORMS 1 AND 2)</scope>
</reference>
<protein>
    <recommendedName>
        <fullName>Beta-defensin 119</fullName>
    </recommendedName>
    <alternativeName>
        <fullName>Beta-defensin 120</fullName>
    </alternativeName>
    <alternativeName>
        <fullName>Defensin, beta 119</fullName>
    </alternativeName>
    <alternativeName>
        <fullName>Defensin, beta 120</fullName>
    </alternativeName>
</protein>
<gene>
    <name type="primary">DEFB119</name>
    <name type="synonym">DEFB120</name>
</gene>
<sequence>MKLLYLFLAILLVIEEPVISGKRYILRCMGNSGICRASCKRNEQPYLYCKNYQSCCLQSYMRISISGKEENTDWSYEKQWPKLP</sequence>
<evidence type="ECO:0000250" key="1"/>
<evidence type="ECO:0000255" key="2"/>
<evidence type="ECO:0000305" key="3"/>
<feature type="signal peptide" evidence="2">
    <location>
        <begin position="1"/>
        <end position="21"/>
    </location>
</feature>
<feature type="peptide" id="PRO_0000289833" description="Beta-defensin 119">
    <location>
        <begin position="22"/>
        <end position="84"/>
    </location>
</feature>
<feature type="disulfide bond" evidence="1">
    <location>
        <begin position="28"/>
        <end position="55"/>
    </location>
</feature>
<feature type="disulfide bond" evidence="1">
    <location>
        <begin position="35"/>
        <end position="49"/>
    </location>
</feature>
<feature type="disulfide bond" evidence="1">
    <location>
        <begin position="39"/>
        <end position="56"/>
    </location>
</feature>
<feature type="splice variant" id="VSP_029876" description="In isoform 2." evidence="3">
    <original>GKRYILRCMGNSGICRASCKRNEQPYLYCKNYQSCCLQSYMRISISGKEENTDWSYEKQWPKLP</original>
    <variation>VECWMDGHCRLLCKDGEDSIIRCRNRKRCCVPSHYLTIQPVTIHGILGWTTPQMPTTAPKAKRNITNR</variation>
    <location>
        <begin position="21"/>
        <end position="84"/>
    </location>
</feature>
<organism>
    <name type="scientific">Pongo pygmaeus</name>
    <name type="common">Bornean orangutan</name>
    <dbReference type="NCBI Taxonomy" id="9600"/>
    <lineage>
        <taxon>Eukaryota</taxon>
        <taxon>Metazoa</taxon>
        <taxon>Chordata</taxon>
        <taxon>Craniata</taxon>
        <taxon>Vertebrata</taxon>
        <taxon>Euteleostomi</taxon>
        <taxon>Mammalia</taxon>
        <taxon>Eutheria</taxon>
        <taxon>Euarchontoglires</taxon>
        <taxon>Primates</taxon>
        <taxon>Haplorrhini</taxon>
        <taxon>Catarrhini</taxon>
        <taxon>Hominidae</taxon>
        <taxon>Pongo</taxon>
    </lineage>
</organism>